<accession>Q3B6F3</accession>
<sequence>MASSSTEGQAAARGRKKSWTGKVVSDSMDKAIIVAVERRVQHPVYKKYFKKTTRLMAHDEKNEAGMGDLVKVVECRPLSKRKSCRLVEIVEKAK</sequence>
<protein>
    <recommendedName>
        <fullName evidence="1">Small ribosomal subunit protein uS17</fullName>
    </recommendedName>
    <alternativeName>
        <fullName evidence="3">30S ribosomal protein S17</fullName>
    </alternativeName>
</protein>
<proteinExistence type="inferred from homology"/>
<feature type="chain" id="PRO_0000233531" description="Small ribosomal subunit protein uS17">
    <location>
        <begin position="1"/>
        <end position="94"/>
    </location>
</feature>
<feature type="region of interest" description="Disordered" evidence="2">
    <location>
        <begin position="1"/>
        <end position="22"/>
    </location>
</feature>
<keyword id="KW-1185">Reference proteome</keyword>
<keyword id="KW-0687">Ribonucleoprotein</keyword>
<keyword id="KW-0689">Ribosomal protein</keyword>
<keyword id="KW-0694">RNA-binding</keyword>
<keyword id="KW-0699">rRNA-binding</keyword>
<comment type="function">
    <text evidence="1">One of the primary rRNA binding proteins, it binds specifically to the 5'-end of 16S ribosomal RNA.</text>
</comment>
<comment type="subunit">
    <text evidence="1">Part of the 30S ribosomal subunit.</text>
</comment>
<comment type="similarity">
    <text evidence="1">Belongs to the universal ribosomal protein uS17 family.</text>
</comment>
<dbReference type="EMBL" id="CP000096">
    <property type="protein sequence ID" value="ABB23078.1"/>
    <property type="molecule type" value="Genomic_DNA"/>
</dbReference>
<dbReference type="RefSeq" id="WP_011356954.1">
    <property type="nucleotide sequence ID" value="NC_007512.1"/>
</dbReference>
<dbReference type="SMR" id="Q3B6F3"/>
<dbReference type="STRING" id="319225.Plut_0190"/>
<dbReference type="KEGG" id="plt:Plut_0190"/>
<dbReference type="eggNOG" id="COG0186">
    <property type="taxonomic scope" value="Bacteria"/>
</dbReference>
<dbReference type="HOGENOM" id="CLU_073626_1_0_10"/>
<dbReference type="OrthoDB" id="9811714at2"/>
<dbReference type="Proteomes" id="UP000002709">
    <property type="component" value="Chromosome"/>
</dbReference>
<dbReference type="GO" id="GO:0022627">
    <property type="term" value="C:cytosolic small ribosomal subunit"/>
    <property type="evidence" value="ECO:0007669"/>
    <property type="project" value="TreeGrafter"/>
</dbReference>
<dbReference type="GO" id="GO:0019843">
    <property type="term" value="F:rRNA binding"/>
    <property type="evidence" value="ECO:0007669"/>
    <property type="project" value="UniProtKB-UniRule"/>
</dbReference>
<dbReference type="GO" id="GO:0003735">
    <property type="term" value="F:structural constituent of ribosome"/>
    <property type="evidence" value="ECO:0007669"/>
    <property type="project" value="InterPro"/>
</dbReference>
<dbReference type="GO" id="GO:0006412">
    <property type="term" value="P:translation"/>
    <property type="evidence" value="ECO:0007669"/>
    <property type="project" value="UniProtKB-UniRule"/>
</dbReference>
<dbReference type="CDD" id="cd00364">
    <property type="entry name" value="Ribosomal_uS17"/>
    <property type="match status" value="1"/>
</dbReference>
<dbReference type="Gene3D" id="2.40.50.140">
    <property type="entry name" value="Nucleic acid-binding proteins"/>
    <property type="match status" value="1"/>
</dbReference>
<dbReference type="HAMAP" id="MF_01345_B">
    <property type="entry name" value="Ribosomal_uS17_B"/>
    <property type="match status" value="1"/>
</dbReference>
<dbReference type="InterPro" id="IPR012340">
    <property type="entry name" value="NA-bd_OB-fold"/>
</dbReference>
<dbReference type="InterPro" id="IPR000266">
    <property type="entry name" value="Ribosomal_uS17"/>
</dbReference>
<dbReference type="InterPro" id="IPR019984">
    <property type="entry name" value="Ribosomal_uS17_bact/chlr"/>
</dbReference>
<dbReference type="InterPro" id="IPR019979">
    <property type="entry name" value="Ribosomal_uS17_CS"/>
</dbReference>
<dbReference type="NCBIfam" id="NF004123">
    <property type="entry name" value="PRK05610.1"/>
    <property type="match status" value="1"/>
</dbReference>
<dbReference type="NCBIfam" id="TIGR03635">
    <property type="entry name" value="uS17_bact"/>
    <property type="match status" value="1"/>
</dbReference>
<dbReference type="PANTHER" id="PTHR10744">
    <property type="entry name" value="40S RIBOSOMAL PROTEIN S11 FAMILY MEMBER"/>
    <property type="match status" value="1"/>
</dbReference>
<dbReference type="PANTHER" id="PTHR10744:SF1">
    <property type="entry name" value="SMALL RIBOSOMAL SUBUNIT PROTEIN US17M"/>
    <property type="match status" value="1"/>
</dbReference>
<dbReference type="Pfam" id="PF00366">
    <property type="entry name" value="Ribosomal_S17"/>
    <property type="match status" value="1"/>
</dbReference>
<dbReference type="PRINTS" id="PR00973">
    <property type="entry name" value="RIBOSOMALS17"/>
</dbReference>
<dbReference type="SUPFAM" id="SSF50249">
    <property type="entry name" value="Nucleic acid-binding proteins"/>
    <property type="match status" value="1"/>
</dbReference>
<dbReference type="PROSITE" id="PS00056">
    <property type="entry name" value="RIBOSOMAL_S17"/>
    <property type="match status" value="1"/>
</dbReference>
<evidence type="ECO:0000255" key="1">
    <source>
        <dbReference type="HAMAP-Rule" id="MF_01345"/>
    </source>
</evidence>
<evidence type="ECO:0000256" key="2">
    <source>
        <dbReference type="SAM" id="MobiDB-lite"/>
    </source>
</evidence>
<evidence type="ECO:0000305" key="3"/>
<gene>
    <name evidence="1" type="primary">rpsQ</name>
    <name type="ordered locus">Plut_0190</name>
</gene>
<organism>
    <name type="scientific">Chlorobium luteolum (strain DSM 273 / BCRC 81028 / 2530)</name>
    <name type="common">Pelodictyon luteolum</name>
    <dbReference type="NCBI Taxonomy" id="319225"/>
    <lineage>
        <taxon>Bacteria</taxon>
        <taxon>Pseudomonadati</taxon>
        <taxon>Chlorobiota</taxon>
        <taxon>Chlorobiia</taxon>
        <taxon>Chlorobiales</taxon>
        <taxon>Chlorobiaceae</taxon>
        <taxon>Chlorobium/Pelodictyon group</taxon>
        <taxon>Pelodictyon</taxon>
    </lineage>
</organism>
<name>RS17_CHLL3</name>
<reference key="1">
    <citation type="submission" date="2005-08" db="EMBL/GenBank/DDBJ databases">
        <title>Complete sequence of Pelodictyon luteolum DSM 273.</title>
        <authorList>
            <consortium name="US DOE Joint Genome Institute"/>
            <person name="Copeland A."/>
            <person name="Lucas S."/>
            <person name="Lapidus A."/>
            <person name="Barry K."/>
            <person name="Detter J.C."/>
            <person name="Glavina T."/>
            <person name="Hammon N."/>
            <person name="Israni S."/>
            <person name="Pitluck S."/>
            <person name="Bryant D."/>
            <person name="Schmutz J."/>
            <person name="Larimer F."/>
            <person name="Land M."/>
            <person name="Kyrpides N."/>
            <person name="Ivanova N."/>
            <person name="Richardson P."/>
        </authorList>
    </citation>
    <scope>NUCLEOTIDE SEQUENCE [LARGE SCALE GENOMIC DNA]</scope>
    <source>
        <strain>DSM 273 / BCRC 81028 / 2530</strain>
    </source>
</reference>